<reference key="1">
    <citation type="submission" date="2007-06" db="EMBL/GenBank/DDBJ databases">
        <title>Complete sequence of Clostridium beijerinckii NCIMB 8052.</title>
        <authorList>
            <consortium name="US DOE Joint Genome Institute"/>
            <person name="Copeland A."/>
            <person name="Lucas S."/>
            <person name="Lapidus A."/>
            <person name="Barry K."/>
            <person name="Detter J.C."/>
            <person name="Glavina del Rio T."/>
            <person name="Hammon N."/>
            <person name="Israni S."/>
            <person name="Dalin E."/>
            <person name="Tice H."/>
            <person name="Pitluck S."/>
            <person name="Sims D."/>
            <person name="Brettin T."/>
            <person name="Bruce D."/>
            <person name="Tapia R."/>
            <person name="Brainard J."/>
            <person name="Schmutz J."/>
            <person name="Larimer F."/>
            <person name="Land M."/>
            <person name="Hauser L."/>
            <person name="Kyrpides N."/>
            <person name="Mikhailova N."/>
            <person name="Bennet G."/>
            <person name="Cann I."/>
            <person name="Chen J.-S."/>
            <person name="Contreras A.L."/>
            <person name="Jones D."/>
            <person name="Kashket E."/>
            <person name="Mitchell W."/>
            <person name="Stoddard S."/>
            <person name="Schwarz W."/>
            <person name="Qureshi N."/>
            <person name="Young M."/>
            <person name="Shi Z."/>
            <person name="Ezeji T."/>
            <person name="White B."/>
            <person name="Blaschek H."/>
            <person name="Richardson P."/>
        </authorList>
    </citation>
    <scope>NUCLEOTIDE SEQUENCE [LARGE SCALE GENOMIC DNA]</scope>
    <source>
        <strain>ATCC 51743 / NCIMB 8052</strain>
    </source>
</reference>
<keyword id="KW-0028">Amino-acid biosynthesis</keyword>
<keyword id="KW-0963">Cytoplasm</keyword>
<keyword id="KW-0368">Histidine biosynthesis</keyword>
<keyword id="KW-0413">Isomerase</keyword>
<sequence>MIILPAIDIIDGKPVRLYQGDYNKKEIVADDVFETAKSFQDMGAEYIHLVDLDGAKSGSNQNHELVIKIANELNIPVELGGGIRSFETIKYLLDNGVARVILGTIAMEDEELLKKAIAIYDSKIAVGIDCKDGKVYGRGWLAASDLDYIEFAKKMENIGVKNIIVTDISKDGTLEGPNVEMLKKLKRTVSIDITASGGIKDIENIKELKNIDLYGAITGKAIYAKTLSLEKAIEISKEGR</sequence>
<proteinExistence type="inferred from homology"/>
<accession>A6LT21</accession>
<comment type="catalytic activity">
    <reaction evidence="1">
        <text>1-(5-phospho-beta-D-ribosyl)-5-[(5-phospho-beta-D-ribosylamino)methylideneamino]imidazole-4-carboxamide = 5-[(5-phospho-1-deoxy-D-ribulos-1-ylimino)methylamino]-1-(5-phospho-beta-D-ribosyl)imidazole-4-carboxamide</text>
        <dbReference type="Rhea" id="RHEA:15469"/>
        <dbReference type="ChEBI" id="CHEBI:58435"/>
        <dbReference type="ChEBI" id="CHEBI:58525"/>
        <dbReference type="EC" id="5.3.1.16"/>
    </reaction>
</comment>
<comment type="pathway">
    <text evidence="1">Amino-acid biosynthesis; L-histidine biosynthesis; L-histidine from 5-phospho-alpha-D-ribose 1-diphosphate: step 4/9.</text>
</comment>
<comment type="subcellular location">
    <subcellularLocation>
        <location evidence="1">Cytoplasm</location>
    </subcellularLocation>
</comment>
<comment type="similarity">
    <text evidence="1">Belongs to the HisA/HisF family.</text>
</comment>
<feature type="chain" id="PRO_1000084093" description="1-(5-phosphoribosyl)-5-[(5-phosphoribosylamino)methylideneamino] imidazole-4-carboxamide isomerase">
    <location>
        <begin position="1"/>
        <end position="240"/>
    </location>
</feature>
<feature type="active site" description="Proton acceptor" evidence="1">
    <location>
        <position position="8"/>
    </location>
</feature>
<feature type="active site" description="Proton donor" evidence="1">
    <location>
        <position position="129"/>
    </location>
</feature>
<evidence type="ECO:0000255" key="1">
    <source>
        <dbReference type="HAMAP-Rule" id="MF_01014"/>
    </source>
</evidence>
<gene>
    <name evidence="1" type="primary">hisA</name>
    <name type="ordered locus">Cbei_1321</name>
</gene>
<protein>
    <recommendedName>
        <fullName evidence="1">1-(5-phosphoribosyl)-5-[(5-phosphoribosylamino)methylideneamino] imidazole-4-carboxamide isomerase</fullName>
        <ecNumber evidence="1">5.3.1.16</ecNumber>
    </recommendedName>
    <alternativeName>
        <fullName evidence="1">Phosphoribosylformimino-5-aminoimidazole carboxamide ribotide isomerase</fullName>
    </alternativeName>
</protein>
<organism>
    <name type="scientific">Clostridium beijerinckii (strain ATCC 51743 / NCIMB 8052)</name>
    <name type="common">Clostridium acetobutylicum</name>
    <dbReference type="NCBI Taxonomy" id="290402"/>
    <lineage>
        <taxon>Bacteria</taxon>
        <taxon>Bacillati</taxon>
        <taxon>Bacillota</taxon>
        <taxon>Clostridia</taxon>
        <taxon>Eubacteriales</taxon>
        <taxon>Clostridiaceae</taxon>
        <taxon>Clostridium</taxon>
    </lineage>
</organism>
<dbReference type="EC" id="5.3.1.16" evidence="1"/>
<dbReference type="EMBL" id="CP000721">
    <property type="protein sequence ID" value="ABR33501.1"/>
    <property type="molecule type" value="Genomic_DNA"/>
</dbReference>
<dbReference type="RefSeq" id="WP_011968655.1">
    <property type="nucleotide sequence ID" value="NC_009617.1"/>
</dbReference>
<dbReference type="SMR" id="A6LT21"/>
<dbReference type="GeneID" id="66344313"/>
<dbReference type="KEGG" id="cbe:Cbei_1321"/>
<dbReference type="eggNOG" id="COG0106">
    <property type="taxonomic scope" value="Bacteria"/>
</dbReference>
<dbReference type="HOGENOM" id="CLU_048577_1_1_9"/>
<dbReference type="UniPathway" id="UPA00031">
    <property type="reaction ID" value="UER00009"/>
</dbReference>
<dbReference type="Proteomes" id="UP000000565">
    <property type="component" value="Chromosome"/>
</dbReference>
<dbReference type="GO" id="GO:0005737">
    <property type="term" value="C:cytoplasm"/>
    <property type="evidence" value="ECO:0007669"/>
    <property type="project" value="UniProtKB-SubCell"/>
</dbReference>
<dbReference type="GO" id="GO:0003949">
    <property type="term" value="F:1-(5-phosphoribosyl)-5-[(5-phosphoribosylamino)methylideneamino]imidazole-4-carboxamide isomerase activity"/>
    <property type="evidence" value="ECO:0007669"/>
    <property type="project" value="UniProtKB-UniRule"/>
</dbReference>
<dbReference type="GO" id="GO:0000105">
    <property type="term" value="P:L-histidine biosynthetic process"/>
    <property type="evidence" value="ECO:0007669"/>
    <property type="project" value="UniProtKB-UniRule"/>
</dbReference>
<dbReference type="GO" id="GO:0000162">
    <property type="term" value="P:L-tryptophan biosynthetic process"/>
    <property type="evidence" value="ECO:0007669"/>
    <property type="project" value="TreeGrafter"/>
</dbReference>
<dbReference type="CDD" id="cd04732">
    <property type="entry name" value="HisA"/>
    <property type="match status" value="1"/>
</dbReference>
<dbReference type="FunFam" id="3.20.20.70:FF:000009">
    <property type="entry name" value="1-(5-phosphoribosyl)-5-[(5-phosphoribosylamino)methylideneamino] imidazole-4-carboxamide isomerase"/>
    <property type="match status" value="1"/>
</dbReference>
<dbReference type="Gene3D" id="3.20.20.70">
    <property type="entry name" value="Aldolase class I"/>
    <property type="match status" value="1"/>
</dbReference>
<dbReference type="HAMAP" id="MF_01014">
    <property type="entry name" value="HisA"/>
    <property type="match status" value="1"/>
</dbReference>
<dbReference type="InterPro" id="IPR013785">
    <property type="entry name" value="Aldolase_TIM"/>
</dbReference>
<dbReference type="InterPro" id="IPR006062">
    <property type="entry name" value="His_biosynth"/>
</dbReference>
<dbReference type="InterPro" id="IPR006063">
    <property type="entry name" value="HisA_bact_arch"/>
</dbReference>
<dbReference type="InterPro" id="IPR044524">
    <property type="entry name" value="Isoase_HisA-like"/>
</dbReference>
<dbReference type="InterPro" id="IPR023016">
    <property type="entry name" value="Isoase_HisA-like_bact"/>
</dbReference>
<dbReference type="InterPro" id="IPR011060">
    <property type="entry name" value="RibuloseP-bd_barrel"/>
</dbReference>
<dbReference type="NCBIfam" id="TIGR00007">
    <property type="entry name" value="1-(5-phosphoribosyl)-5-[(5-phosphoribosylamino)methylideneamino]imidazole-4-carboxamide isomerase"/>
    <property type="match status" value="1"/>
</dbReference>
<dbReference type="PANTHER" id="PTHR43090">
    <property type="entry name" value="1-(5-PHOSPHORIBOSYL)-5-[(5-PHOSPHORIBOSYLAMINO)METHYLIDENEAMINO] IMIDAZOLE-4-CARBOXAMIDE ISOMERASE"/>
    <property type="match status" value="1"/>
</dbReference>
<dbReference type="PANTHER" id="PTHR43090:SF2">
    <property type="entry name" value="1-(5-PHOSPHORIBOSYL)-5-[(5-PHOSPHORIBOSYLAMINO)METHYLIDENEAMINO] IMIDAZOLE-4-CARBOXAMIDE ISOMERASE"/>
    <property type="match status" value="1"/>
</dbReference>
<dbReference type="Pfam" id="PF00977">
    <property type="entry name" value="His_biosynth"/>
    <property type="match status" value="1"/>
</dbReference>
<dbReference type="SUPFAM" id="SSF51366">
    <property type="entry name" value="Ribulose-phoshate binding barrel"/>
    <property type="match status" value="1"/>
</dbReference>
<name>HIS4_CLOB8</name>